<sequence>MARGPAGKNRGVSKISKWYKADDEATPFHRRQLKKATATKLRNDIAPGTVLILLAGRFRGKRVVFLKQLKSGLLLVTGPYKVNGVPLKRVNQAYTLSTSTKVDLTGVNTAKFEDDYFGREKARKNHKNLFKAELTEEQKKKETERKNARKQDQQAVDTPLLAAVKKVEFLKNYLASKFTLNNNDRPHEMKF</sequence>
<evidence type="ECO:0000305" key="1"/>
<protein>
    <recommendedName>
        <fullName evidence="1">Large ribosomal subunit protein eL6</fullName>
    </recommendedName>
    <alternativeName>
        <fullName>60S ribosomal protein L6</fullName>
    </alternativeName>
</protein>
<proteinExistence type="evidence at protein level"/>
<accession>P0DJ56</accession>
<reference key="1">
    <citation type="journal article" date="2006" name="PLoS Biol.">
        <title>Macronuclear genome sequence of the ciliate Tetrahymena thermophila, a model eukaryote.</title>
        <authorList>
            <person name="Eisen J.A."/>
            <person name="Coyne R.S."/>
            <person name="Wu M."/>
            <person name="Wu D."/>
            <person name="Thiagarajan M."/>
            <person name="Wortman J.R."/>
            <person name="Badger J.H."/>
            <person name="Ren Q."/>
            <person name="Amedeo P."/>
            <person name="Jones K.M."/>
            <person name="Tallon L.J."/>
            <person name="Delcher A.L."/>
            <person name="Salzberg S.L."/>
            <person name="Silva J.C."/>
            <person name="Haas B.J."/>
            <person name="Majoros W.H."/>
            <person name="Farzad M."/>
            <person name="Carlton J.M."/>
            <person name="Smith R.K. Jr."/>
            <person name="Garg J."/>
            <person name="Pearlman R.E."/>
            <person name="Karrer K.M."/>
            <person name="Sun L."/>
            <person name="Manning G."/>
            <person name="Elde N.C."/>
            <person name="Turkewitz A.P."/>
            <person name="Asai D.J."/>
            <person name="Wilkes D.E."/>
            <person name="Wang Y."/>
            <person name="Cai H."/>
            <person name="Collins K."/>
            <person name="Stewart B.A."/>
            <person name="Lee S.R."/>
            <person name="Wilamowska K."/>
            <person name="Weinberg Z."/>
            <person name="Ruzzo W.L."/>
            <person name="Wloga D."/>
            <person name="Gaertig J."/>
            <person name="Frankel J."/>
            <person name="Tsao C.-C."/>
            <person name="Gorovsky M.A."/>
            <person name="Keeling P.J."/>
            <person name="Waller R.F."/>
            <person name="Patron N.J."/>
            <person name="Cherry J.M."/>
            <person name="Stover N.A."/>
            <person name="Krieger C.J."/>
            <person name="del Toro C."/>
            <person name="Ryder H.F."/>
            <person name="Williamson S.C."/>
            <person name="Barbeau R.A."/>
            <person name="Hamilton E.P."/>
            <person name="Orias E."/>
        </authorList>
    </citation>
    <scope>NUCLEOTIDE SEQUENCE [LARGE SCALE GENOMIC DNA]</scope>
    <source>
        <strain>SB210</strain>
    </source>
</reference>
<feature type="chain" id="PRO_0000413492" description="Large ribosomal subunit protein eL6">
    <location>
        <begin position="1"/>
        <end position="191"/>
    </location>
</feature>
<organism>
    <name type="scientific">Tetrahymena thermophila (strain SB210)</name>
    <dbReference type="NCBI Taxonomy" id="312017"/>
    <lineage>
        <taxon>Eukaryota</taxon>
        <taxon>Sar</taxon>
        <taxon>Alveolata</taxon>
        <taxon>Ciliophora</taxon>
        <taxon>Intramacronucleata</taxon>
        <taxon>Oligohymenophorea</taxon>
        <taxon>Hymenostomatida</taxon>
        <taxon>Tetrahymenina</taxon>
        <taxon>Tetrahymenidae</taxon>
        <taxon>Tetrahymena</taxon>
    </lineage>
</organism>
<gene>
    <name type="primary">RPL6</name>
    <name type="ORF">TTHERM_00136120A</name>
</gene>
<name>RL6_TETTS</name>
<dbReference type="EMBL" id="GG662639">
    <property type="protein sequence ID" value="EAR99448.2"/>
    <property type="molecule type" value="Genomic_DNA"/>
</dbReference>
<dbReference type="RefSeq" id="XP_001019693.2">
    <property type="nucleotide sequence ID" value="XM_001019693.3"/>
</dbReference>
<dbReference type="PDB" id="4V8P">
    <property type="method" value="X-ray"/>
    <property type="resolution" value="3.52 A"/>
    <property type="chains" value="AE/DE/FE/HE=1-191"/>
</dbReference>
<dbReference type="PDBsum" id="4V8P"/>
<dbReference type="SMR" id="P0DJ56"/>
<dbReference type="FunCoup" id="P0DJ56">
    <property type="interactions" value="522"/>
</dbReference>
<dbReference type="IntAct" id="P0DJ56">
    <property type="interactions" value="1"/>
</dbReference>
<dbReference type="STRING" id="312017.P0DJ56"/>
<dbReference type="EnsemblProtists" id="EAR99448">
    <property type="protein sequence ID" value="EAR99448"/>
    <property type="gene ID" value="TTHERM_00136120"/>
</dbReference>
<dbReference type="KEGG" id="tet:TTHERM_00136120"/>
<dbReference type="eggNOG" id="KOG1694">
    <property type="taxonomic scope" value="Eukaryota"/>
</dbReference>
<dbReference type="HOGENOM" id="CLU_066767_2_1_1"/>
<dbReference type="InParanoid" id="P0DJ56"/>
<dbReference type="OMA" id="KWYNADD"/>
<dbReference type="OrthoDB" id="2436667at2759"/>
<dbReference type="Proteomes" id="UP000009168">
    <property type="component" value="Unassembled WGS sequence"/>
</dbReference>
<dbReference type="GO" id="GO:0022625">
    <property type="term" value="C:cytosolic large ribosomal subunit"/>
    <property type="evidence" value="ECO:0007669"/>
    <property type="project" value="TreeGrafter"/>
</dbReference>
<dbReference type="GO" id="GO:0003723">
    <property type="term" value="F:RNA binding"/>
    <property type="evidence" value="ECO:0007669"/>
    <property type="project" value="TreeGrafter"/>
</dbReference>
<dbReference type="GO" id="GO:0003735">
    <property type="term" value="F:structural constituent of ribosome"/>
    <property type="evidence" value="ECO:0007669"/>
    <property type="project" value="InterPro"/>
</dbReference>
<dbReference type="GO" id="GO:0002181">
    <property type="term" value="P:cytoplasmic translation"/>
    <property type="evidence" value="ECO:0007669"/>
    <property type="project" value="TreeGrafter"/>
</dbReference>
<dbReference type="GO" id="GO:0000027">
    <property type="term" value="P:ribosomal large subunit assembly"/>
    <property type="evidence" value="ECO:0007669"/>
    <property type="project" value="TreeGrafter"/>
</dbReference>
<dbReference type="CDD" id="cd13156">
    <property type="entry name" value="KOW_RPL6"/>
    <property type="match status" value="1"/>
</dbReference>
<dbReference type="FunFam" id="2.30.30.30:FF:000014">
    <property type="entry name" value="60S ribosomal protein L6"/>
    <property type="match status" value="1"/>
</dbReference>
<dbReference type="Gene3D" id="2.30.30.30">
    <property type="match status" value="1"/>
</dbReference>
<dbReference type="InterPro" id="IPR000915">
    <property type="entry name" value="60S_ribosomal_eL6"/>
</dbReference>
<dbReference type="InterPro" id="IPR014722">
    <property type="entry name" value="Rib_uL2_dom2"/>
</dbReference>
<dbReference type="InterPro" id="IPR041997">
    <property type="entry name" value="Ribosomal_eL6_KOW"/>
</dbReference>
<dbReference type="InterPro" id="IPR008991">
    <property type="entry name" value="Translation_prot_SH3-like_sf"/>
</dbReference>
<dbReference type="PANTHER" id="PTHR10715">
    <property type="entry name" value="60S RIBOSOMAL PROTEIN L6"/>
    <property type="match status" value="1"/>
</dbReference>
<dbReference type="PANTHER" id="PTHR10715:SF0">
    <property type="entry name" value="LARGE RIBOSOMAL SUBUNIT PROTEIN EL6"/>
    <property type="match status" value="1"/>
</dbReference>
<dbReference type="Pfam" id="PF01159">
    <property type="entry name" value="Ribosomal_L6e"/>
    <property type="match status" value="1"/>
</dbReference>
<dbReference type="SUPFAM" id="SSF50104">
    <property type="entry name" value="Translation proteins SH3-like domain"/>
    <property type="match status" value="1"/>
</dbReference>
<keyword id="KW-0002">3D-structure</keyword>
<keyword id="KW-1185">Reference proteome</keyword>
<keyword id="KW-0687">Ribonucleoprotein</keyword>
<keyword id="KW-0689">Ribosomal protein</keyword>
<comment type="similarity">
    <text evidence="1">Belongs to the eukaryotic ribosomal protein eL6 family.</text>
</comment>